<proteinExistence type="inferred from homology"/>
<protein>
    <recommendedName>
        <fullName evidence="1">Uracil-DNA glycosylase</fullName>
        <shortName evidence="1">UDG</shortName>
        <ecNumber evidence="1">3.2.2.27</ecNumber>
    </recommendedName>
</protein>
<keyword id="KW-0963">Cytoplasm</keyword>
<keyword id="KW-0227">DNA damage</keyword>
<keyword id="KW-0234">DNA repair</keyword>
<keyword id="KW-0378">Hydrolase</keyword>
<evidence type="ECO:0000255" key="1">
    <source>
        <dbReference type="HAMAP-Rule" id="MF_00148"/>
    </source>
</evidence>
<comment type="function">
    <text evidence="1">Excises uracil residues from the DNA which can arise as a result of misincorporation of dUMP residues by DNA polymerase or due to deamination of cytosine.</text>
</comment>
<comment type="catalytic activity">
    <reaction evidence="1">
        <text>Hydrolyzes single-stranded DNA or mismatched double-stranded DNA and polynucleotides, releasing free uracil.</text>
        <dbReference type="EC" id="3.2.2.27"/>
    </reaction>
</comment>
<comment type="subcellular location">
    <subcellularLocation>
        <location evidence="1">Cytoplasm</location>
    </subcellularLocation>
</comment>
<comment type="similarity">
    <text evidence="1">Belongs to the uracil-DNA glycosylase (UDG) superfamily. UNG family.</text>
</comment>
<dbReference type="EC" id="3.2.2.27" evidence="1"/>
<dbReference type="EMBL" id="BX251410">
    <property type="protein sequence ID" value="CAD66858.1"/>
    <property type="molecule type" value="Genomic_DNA"/>
</dbReference>
<dbReference type="RefSeq" id="WP_011096139.1">
    <property type="nucleotide sequence ID" value="NC_004551.1"/>
</dbReference>
<dbReference type="SMR" id="P67079"/>
<dbReference type="GeneID" id="67387957"/>
<dbReference type="KEGG" id="tws:TW179"/>
<dbReference type="HOGENOM" id="CLU_032162_3_1_11"/>
<dbReference type="GO" id="GO:0005737">
    <property type="term" value="C:cytoplasm"/>
    <property type="evidence" value="ECO:0007669"/>
    <property type="project" value="UniProtKB-SubCell"/>
</dbReference>
<dbReference type="GO" id="GO:0004844">
    <property type="term" value="F:uracil DNA N-glycosylase activity"/>
    <property type="evidence" value="ECO:0007669"/>
    <property type="project" value="UniProtKB-UniRule"/>
</dbReference>
<dbReference type="GO" id="GO:0097510">
    <property type="term" value="P:base-excision repair, AP site formation via deaminated base removal"/>
    <property type="evidence" value="ECO:0007669"/>
    <property type="project" value="TreeGrafter"/>
</dbReference>
<dbReference type="CDD" id="cd10027">
    <property type="entry name" value="UDG-F1-like"/>
    <property type="match status" value="1"/>
</dbReference>
<dbReference type="FunFam" id="3.40.470.10:FF:000006">
    <property type="entry name" value="Uracil-DNA glycosylase"/>
    <property type="match status" value="1"/>
</dbReference>
<dbReference type="Gene3D" id="3.40.470.10">
    <property type="entry name" value="Uracil-DNA glycosylase-like domain"/>
    <property type="match status" value="1"/>
</dbReference>
<dbReference type="HAMAP" id="MF_00148">
    <property type="entry name" value="UDG"/>
    <property type="match status" value="1"/>
</dbReference>
<dbReference type="InterPro" id="IPR002043">
    <property type="entry name" value="UDG_fam1"/>
</dbReference>
<dbReference type="InterPro" id="IPR018085">
    <property type="entry name" value="Ura-DNA_Glyclase_AS"/>
</dbReference>
<dbReference type="InterPro" id="IPR005122">
    <property type="entry name" value="Uracil-DNA_glycosylase-like"/>
</dbReference>
<dbReference type="InterPro" id="IPR036895">
    <property type="entry name" value="Uracil-DNA_glycosylase-like_sf"/>
</dbReference>
<dbReference type="NCBIfam" id="NF003588">
    <property type="entry name" value="PRK05254.1-1"/>
    <property type="match status" value="1"/>
</dbReference>
<dbReference type="NCBIfam" id="NF003592">
    <property type="entry name" value="PRK05254.1-5"/>
    <property type="match status" value="1"/>
</dbReference>
<dbReference type="NCBIfam" id="TIGR00628">
    <property type="entry name" value="ung"/>
    <property type="match status" value="1"/>
</dbReference>
<dbReference type="PANTHER" id="PTHR11264">
    <property type="entry name" value="URACIL-DNA GLYCOSYLASE"/>
    <property type="match status" value="1"/>
</dbReference>
<dbReference type="PANTHER" id="PTHR11264:SF0">
    <property type="entry name" value="URACIL-DNA GLYCOSYLASE"/>
    <property type="match status" value="1"/>
</dbReference>
<dbReference type="Pfam" id="PF03167">
    <property type="entry name" value="UDG"/>
    <property type="match status" value="1"/>
</dbReference>
<dbReference type="SMART" id="SM00986">
    <property type="entry name" value="UDG"/>
    <property type="match status" value="1"/>
</dbReference>
<dbReference type="SMART" id="SM00987">
    <property type="entry name" value="UreE_C"/>
    <property type="match status" value="1"/>
</dbReference>
<dbReference type="SUPFAM" id="SSF52141">
    <property type="entry name" value="Uracil-DNA glycosylase-like"/>
    <property type="match status" value="1"/>
</dbReference>
<dbReference type="PROSITE" id="PS00130">
    <property type="entry name" value="U_DNA_GLYCOSYLASE"/>
    <property type="match status" value="1"/>
</dbReference>
<feature type="chain" id="PRO_0000176159" description="Uracil-DNA glycosylase">
    <location>
        <begin position="1"/>
        <end position="230"/>
    </location>
</feature>
<feature type="active site" description="Proton acceptor" evidence="1">
    <location>
        <position position="71"/>
    </location>
</feature>
<organism>
    <name type="scientific">Tropheryma whipplei (strain TW08/27)</name>
    <name type="common">Whipple's bacillus</name>
    <dbReference type="NCBI Taxonomy" id="218496"/>
    <lineage>
        <taxon>Bacteria</taxon>
        <taxon>Bacillati</taxon>
        <taxon>Actinomycetota</taxon>
        <taxon>Actinomycetes</taxon>
        <taxon>Micrococcales</taxon>
        <taxon>Tropherymataceae</taxon>
        <taxon>Tropheryma</taxon>
    </lineage>
</organism>
<sequence length="230" mass="25457">MGYLHVLAQRGVIHATWVSALEPVSSNLAAMGDCLRSLRSKGESFLPAPRNILRAFRYPFDSVRVLIVGQDPYPTQGHPIGLSFAVDHKVRPLPGSLQNIYTEYRSDLNLDPPQHGDISLWSERGVMLLNRTLTVRPGIPSSHRGLGWEEITQTAVRALAARDVPLIAILWGRHAQELKSVLQSDRVAILESVHPSPMSATRGFFGSKPFSKANDLLRDLGSAPIDWRLT</sequence>
<name>UNG_TROW8</name>
<reference key="1">
    <citation type="journal article" date="2003" name="Lancet">
        <title>Sequencing and analysis of the genome of the Whipple's disease bacterium Tropheryma whipplei.</title>
        <authorList>
            <person name="Bentley S.D."/>
            <person name="Maiwald M."/>
            <person name="Murphy L.D."/>
            <person name="Pallen M.J."/>
            <person name="Yeats C.A."/>
            <person name="Dover L.G."/>
            <person name="Norbertczak H.T."/>
            <person name="Besra G.S."/>
            <person name="Quail M.A."/>
            <person name="Harris D.E."/>
            <person name="von Herbay A."/>
            <person name="Goble A."/>
            <person name="Rutter S."/>
            <person name="Squares R."/>
            <person name="Squares S."/>
            <person name="Barrell B.G."/>
            <person name="Parkhill J."/>
            <person name="Relman D.A."/>
        </authorList>
    </citation>
    <scope>NUCLEOTIDE SEQUENCE [LARGE SCALE GENOMIC DNA]</scope>
    <source>
        <strain>TW08/27</strain>
    </source>
</reference>
<accession>P67079</accession>
<accession>Q83FW3</accession>
<accession>Q83NR7</accession>
<gene>
    <name evidence="1" type="primary">ung</name>
    <name type="ordered locus">TW179</name>
</gene>